<comment type="function">
    <text evidence="1">Catalyzes the methylthiolation of N6-(dimethylallyl)adenosine (i(6)A), leading to the formation of 2-methylthio-N6-(dimethylallyl)adenosine (ms(2)i(6)A) at position 37 in tRNAs that read codons beginning with uridine.</text>
</comment>
<comment type="catalytic activity">
    <reaction evidence="1">
        <text>N(6)-dimethylallyladenosine(37) in tRNA + (sulfur carrier)-SH + AH2 + 2 S-adenosyl-L-methionine = 2-methylsulfanyl-N(6)-dimethylallyladenosine(37) in tRNA + (sulfur carrier)-H + 5'-deoxyadenosine + L-methionine + A + S-adenosyl-L-homocysteine + 2 H(+)</text>
        <dbReference type="Rhea" id="RHEA:37067"/>
        <dbReference type="Rhea" id="RHEA-COMP:10375"/>
        <dbReference type="Rhea" id="RHEA-COMP:10376"/>
        <dbReference type="Rhea" id="RHEA-COMP:14737"/>
        <dbReference type="Rhea" id="RHEA-COMP:14739"/>
        <dbReference type="ChEBI" id="CHEBI:13193"/>
        <dbReference type="ChEBI" id="CHEBI:15378"/>
        <dbReference type="ChEBI" id="CHEBI:17319"/>
        <dbReference type="ChEBI" id="CHEBI:17499"/>
        <dbReference type="ChEBI" id="CHEBI:29917"/>
        <dbReference type="ChEBI" id="CHEBI:57844"/>
        <dbReference type="ChEBI" id="CHEBI:57856"/>
        <dbReference type="ChEBI" id="CHEBI:59789"/>
        <dbReference type="ChEBI" id="CHEBI:64428"/>
        <dbReference type="ChEBI" id="CHEBI:74415"/>
        <dbReference type="ChEBI" id="CHEBI:74417"/>
        <dbReference type="EC" id="2.8.4.3"/>
    </reaction>
</comment>
<comment type="cofactor">
    <cofactor evidence="1">
        <name>[4Fe-4S] cluster</name>
        <dbReference type="ChEBI" id="CHEBI:49883"/>
    </cofactor>
    <text evidence="1">Binds 2 [4Fe-4S] clusters. One cluster is coordinated with 3 cysteines and an exchangeable S-adenosyl-L-methionine.</text>
</comment>
<comment type="subunit">
    <text evidence="1">Monomer.</text>
</comment>
<comment type="subcellular location">
    <subcellularLocation>
        <location evidence="1">Cytoplasm</location>
    </subcellularLocation>
</comment>
<comment type="similarity">
    <text evidence="1">Belongs to the methylthiotransferase family. MiaB subfamily.</text>
</comment>
<comment type="sequence caution" evidence="3">
    <conflict type="erroneous initiation">
        <sequence resource="EMBL-CDS" id="ACK84348"/>
    </conflict>
</comment>
<gene>
    <name evidence="1" type="primary">miaB</name>
    <name type="ordered locus">Mchl_3528</name>
</gene>
<feature type="chain" id="PRO_0000374376" description="tRNA-2-methylthio-N(6)-dimethylallyladenosine synthase">
    <location>
        <begin position="1"/>
        <end position="446"/>
    </location>
</feature>
<feature type="domain" description="MTTase N-terminal" evidence="1">
    <location>
        <begin position="2"/>
        <end position="122"/>
    </location>
</feature>
<feature type="domain" description="Radical SAM core" evidence="2">
    <location>
        <begin position="143"/>
        <end position="375"/>
    </location>
</feature>
<feature type="domain" description="TRAM" evidence="1">
    <location>
        <begin position="378"/>
        <end position="440"/>
    </location>
</feature>
<feature type="binding site" evidence="1">
    <location>
        <position position="11"/>
    </location>
    <ligand>
        <name>[4Fe-4S] cluster</name>
        <dbReference type="ChEBI" id="CHEBI:49883"/>
        <label>1</label>
    </ligand>
</feature>
<feature type="binding site" evidence="1">
    <location>
        <position position="47"/>
    </location>
    <ligand>
        <name>[4Fe-4S] cluster</name>
        <dbReference type="ChEBI" id="CHEBI:49883"/>
        <label>1</label>
    </ligand>
</feature>
<feature type="binding site" evidence="1">
    <location>
        <position position="85"/>
    </location>
    <ligand>
        <name>[4Fe-4S] cluster</name>
        <dbReference type="ChEBI" id="CHEBI:49883"/>
        <label>1</label>
    </ligand>
</feature>
<feature type="binding site" evidence="1">
    <location>
        <position position="157"/>
    </location>
    <ligand>
        <name>[4Fe-4S] cluster</name>
        <dbReference type="ChEBI" id="CHEBI:49883"/>
        <label>2</label>
        <note>4Fe-4S-S-AdoMet</note>
    </ligand>
</feature>
<feature type="binding site" evidence="1">
    <location>
        <position position="161"/>
    </location>
    <ligand>
        <name>[4Fe-4S] cluster</name>
        <dbReference type="ChEBI" id="CHEBI:49883"/>
        <label>2</label>
        <note>4Fe-4S-S-AdoMet</note>
    </ligand>
</feature>
<feature type="binding site" evidence="1">
    <location>
        <position position="164"/>
    </location>
    <ligand>
        <name>[4Fe-4S] cluster</name>
        <dbReference type="ChEBI" id="CHEBI:49883"/>
        <label>2</label>
        <note>4Fe-4S-S-AdoMet</note>
    </ligand>
</feature>
<name>MIAB_METC4</name>
<keyword id="KW-0004">4Fe-4S</keyword>
<keyword id="KW-0963">Cytoplasm</keyword>
<keyword id="KW-0408">Iron</keyword>
<keyword id="KW-0411">Iron-sulfur</keyword>
<keyword id="KW-0479">Metal-binding</keyword>
<keyword id="KW-0949">S-adenosyl-L-methionine</keyword>
<keyword id="KW-0808">Transferase</keyword>
<keyword id="KW-0819">tRNA processing</keyword>
<accession>B7KVE0</accession>
<dbReference type="EC" id="2.8.4.3" evidence="1"/>
<dbReference type="EMBL" id="CP001298">
    <property type="protein sequence ID" value="ACK84348.1"/>
    <property type="status" value="ALT_INIT"/>
    <property type="molecule type" value="Genomic_DNA"/>
</dbReference>
<dbReference type="RefSeq" id="WP_041929278.1">
    <property type="nucleotide sequence ID" value="NC_011757.1"/>
</dbReference>
<dbReference type="SMR" id="B7KVE0"/>
<dbReference type="KEGG" id="mch:Mchl_3528"/>
<dbReference type="HOGENOM" id="CLU_018697_2_0_5"/>
<dbReference type="Proteomes" id="UP000002385">
    <property type="component" value="Chromosome"/>
</dbReference>
<dbReference type="GO" id="GO:0005829">
    <property type="term" value="C:cytosol"/>
    <property type="evidence" value="ECO:0007669"/>
    <property type="project" value="TreeGrafter"/>
</dbReference>
<dbReference type="GO" id="GO:0051539">
    <property type="term" value="F:4 iron, 4 sulfur cluster binding"/>
    <property type="evidence" value="ECO:0007669"/>
    <property type="project" value="UniProtKB-UniRule"/>
</dbReference>
<dbReference type="GO" id="GO:0046872">
    <property type="term" value="F:metal ion binding"/>
    <property type="evidence" value="ECO:0007669"/>
    <property type="project" value="UniProtKB-KW"/>
</dbReference>
<dbReference type="GO" id="GO:0035597">
    <property type="term" value="F:N6-isopentenyladenosine methylthiotransferase activity"/>
    <property type="evidence" value="ECO:0007669"/>
    <property type="project" value="TreeGrafter"/>
</dbReference>
<dbReference type="CDD" id="cd01335">
    <property type="entry name" value="Radical_SAM"/>
    <property type="match status" value="1"/>
</dbReference>
<dbReference type="FunFam" id="3.40.50.12160:FF:000003">
    <property type="entry name" value="CDK5 regulatory subunit-associated protein 1"/>
    <property type="match status" value="1"/>
</dbReference>
<dbReference type="FunFam" id="3.80.30.20:FF:000001">
    <property type="entry name" value="tRNA-2-methylthio-N(6)-dimethylallyladenosine synthase 2"/>
    <property type="match status" value="1"/>
</dbReference>
<dbReference type="Gene3D" id="3.40.50.12160">
    <property type="entry name" value="Methylthiotransferase, N-terminal domain"/>
    <property type="match status" value="1"/>
</dbReference>
<dbReference type="Gene3D" id="3.80.30.20">
    <property type="entry name" value="tm_1862 like domain"/>
    <property type="match status" value="1"/>
</dbReference>
<dbReference type="HAMAP" id="MF_01864">
    <property type="entry name" value="tRNA_metthiotr_MiaB"/>
    <property type="match status" value="1"/>
</dbReference>
<dbReference type="InterPro" id="IPR006638">
    <property type="entry name" value="Elp3/MiaA/NifB-like_rSAM"/>
</dbReference>
<dbReference type="InterPro" id="IPR005839">
    <property type="entry name" value="Methylthiotransferase"/>
</dbReference>
<dbReference type="InterPro" id="IPR020612">
    <property type="entry name" value="Methylthiotransferase_CS"/>
</dbReference>
<dbReference type="InterPro" id="IPR013848">
    <property type="entry name" value="Methylthiotransferase_N"/>
</dbReference>
<dbReference type="InterPro" id="IPR038135">
    <property type="entry name" value="Methylthiotransferase_N_sf"/>
</dbReference>
<dbReference type="InterPro" id="IPR006463">
    <property type="entry name" value="MiaB_methiolase"/>
</dbReference>
<dbReference type="InterPro" id="IPR007197">
    <property type="entry name" value="rSAM"/>
</dbReference>
<dbReference type="InterPro" id="IPR023404">
    <property type="entry name" value="rSAM_horseshoe"/>
</dbReference>
<dbReference type="InterPro" id="IPR002792">
    <property type="entry name" value="TRAM_dom"/>
</dbReference>
<dbReference type="NCBIfam" id="TIGR01574">
    <property type="entry name" value="miaB-methiolase"/>
    <property type="match status" value="1"/>
</dbReference>
<dbReference type="NCBIfam" id="TIGR00089">
    <property type="entry name" value="MiaB/RimO family radical SAM methylthiotransferase"/>
    <property type="match status" value="1"/>
</dbReference>
<dbReference type="PANTHER" id="PTHR43020">
    <property type="entry name" value="CDK5 REGULATORY SUBUNIT-ASSOCIATED PROTEIN 1"/>
    <property type="match status" value="1"/>
</dbReference>
<dbReference type="PANTHER" id="PTHR43020:SF2">
    <property type="entry name" value="MITOCHONDRIAL TRNA METHYLTHIOTRANSFERASE CDK5RAP1"/>
    <property type="match status" value="1"/>
</dbReference>
<dbReference type="Pfam" id="PF04055">
    <property type="entry name" value="Radical_SAM"/>
    <property type="match status" value="1"/>
</dbReference>
<dbReference type="Pfam" id="PF01938">
    <property type="entry name" value="TRAM"/>
    <property type="match status" value="1"/>
</dbReference>
<dbReference type="Pfam" id="PF00919">
    <property type="entry name" value="UPF0004"/>
    <property type="match status" value="1"/>
</dbReference>
<dbReference type="SFLD" id="SFLDF00273">
    <property type="entry name" value="(dimethylallyl)adenosine_tRNA"/>
    <property type="match status" value="1"/>
</dbReference>
<dbReference type="SFLD" id="SFLDG01082">
    <property type="entry name" value="B12-binding_domain_containing"/>
    <property type="match status" value="1"/>
</dbReference>
<dbReference type="SFLD" id="SFLDG01061">
    <property type="entry name" value="methylthiotransferase"/>
    <property type="match status" value="1"/>
</dbReference>
<dbReference type="SMART" id="SM00729">
    <property type="entry name" value="Elp3"/>
    <property type="match status" value="1"/>
</dbReference>
<dbReference type="SUPFAM" id="SSF102114">
    <property type="entry name" value="Radical SAM enzymes"/>
    <property type="match status" value="1"/>
</dbReference>
<dbReference type="PROSITE" id="PS51449">
    <property type="entry name" value="MTTASE_N"/>
    <property type="match status" value="1"/>
</dbReference>
<dbReference type="PROSITE" id="PS01278">
    <property type="entry name" value="MTTASE_RADICAL"/>
    <property type="match status" value="1"/>
</dbReference>
<dbReference type="PROSITE" id="PS51918">
    <property type="entry name" value="RADICAL_SAM"/>
    <property type="match status" value="1"/>
</dbReference>
<dbReference type="PROSITE" id="PS50926">
    <property type="entry name" value="TRAM"/>
    <property type="match status" value="1"/>
</dbReference>
<protein>
    <recommendedName>
        <fullName evidence="1">tRNA-2-methylthio-N(6)-dimethylallyladenosine synthase</fullName>
        <ecNumber evidence="1">2.8.4.3</ecNumber>
    </recommendedName>
    <alternativeName>
        <fullName evidence="1">(Dimethylallyl)adenosine tRNA methylthiotransferase MiaB</fullName>
    </alternativeName>
    <alternativeName>
        <fullName evidence="1">tRNA-i(6)A37 methylthiotransferase</fullName>
    </alternativeName>
</protein>
<proteinExistence type="inferred from homology"/>
<sequence length="446" mass="48174">MKKAYVKSYGCQMNAYDAGRMADVLAAEGYSATDTVEEADVVVLNTCHIREKAAEKVYSELGRLRVLKGDRAESGQETRIVVAGCVAQAEGREILSRAPAVDVVVGPQSYHRLPDLLRQSRETRVVDTEFPAEDKFDHLPARRNRGVTGFLTVQEGCDKFCAFCVVPYTRGAEVSRSVAAVVEEARRLVEGGVREITLIGQNVNAYHGDGPDGAPATLGQLMDALSAVPGLLRLRYTTSHPNDFADDLIAAHATNPLVMPYLHLPVQSGSDRILHAMNRRHTGDAYRRLIERIRNARPDIALSSDFIVGFPGETDADFAETLRLVSDIGFSAAFSFKYSPRAGTPAAEREDAVPEAVKTERLAALQDLLDRQRHAYNAASVGTLTEILVEKTGRHPGQVAGKTPHLQAVQFDAPASTIGTVVPVRITRAGSNSLFGEALEGAAAAA</sequence>
<organism>
    <name type="scientific">Methylorubrum extorquens (strain CM4 / NCIMB 13688)</name>
    <name type="common">Methylobacterium extorquens</name>
    <dbReference type="NCBI Taxonomy" id="440085"/>
    <lineage>
        <taxon>Bacteria</taxon>
        <taxon>Pseudomonadati</taxon>
        <taxon>Pseudomonadota</taxon>
        <taxon>Alphaproteobacteria</taxon>
        <taxon>Hyphomicrobiales</taxon>
        <taxon>Methylobacteriaceae</taxon>
        <taxon>Methylorubrum</taxon>
    </lineage>
</organism>
<evidence type="ECO:0000255" key="1">
    <source>
        <dbReference type="HAMAP-Rule" id="MF_01864"/>
    </source>
</evidence>
<evidence type="ECO:0000255" key="2">
    <source>
        <dbReference type="PROSITE-ProRule" id="PRU01266"/>
    </source>
</evidence>
<evidence type="ECO:0000305" key="3"/>
<reference key="1">
    <citation type="submission" date="2008-12" db="EMBL/GenBank/DDBJ databases">
        <title>Complete sequence of chromosome of Methylobacterium chloromethanicum CM4.</title>
        <authorList>
            <consortium name="US DOE Joint Genome Institute"/>
            <person name="Lucas S."/>
            <person name="Copeland A."/>
            <person name="Lapidus A."/>
            <person name="Glavina del Rio T."/>
            <person name="Dalin E."/>
            <person name="Tice H."/>
            <person name="Bruce D."/>
            <person name="Goodwin L."/>
            <person name="Pitluck S."/>
            <person name="Chertkov O."/>
            <person name="Brettin T."/>
            <person name="Detter J.C."/>
            <person name="Han C."/>
            <person name="Larimer F."/>
            <person name="Land M."/>
            <person name="Hauser L."/>
            <person name="Kyrpides N."/>
            <person name="Mikhailova N."/>
            <person name="Marx C."/>
            <person name="Richardson P."/>
        </authorList>
    </citation>
    <scope>NUCLEOTIDE SEQUENCE [LARGE SCALE GENOMIC DNA]</scope>
    <source>
        <strain>CM4 / NCIMB 13688</strain>
    </source>
</reference>